<comment type="similarity">
    <text evidence="1">Belongs to the UPF0235 family.</text>
</comment>
<dbReference type="EMBL" id="CP000468">
    <property type="protein sequence ID" value="ABJ02379.1"/>
    <property type="molecule type" value="Genomic_DNA"/>
</dbReference>
<dbReference type="RefSeq" id="WP_001277222.1">
    <property type="nucleotide sequence ID" value="NZ_CADILS010000010.1"/>
</dbReference>
<dbReference type="BMRB" id="A1AFD9"/>
<dbReference type="SMR" id="A1AFD9"/>
<dbReference type="GeneID" id="86861043"/>
<dbReference type="KEGG" id="ecv:APECO1_3568"/>
<dbReference type="HOGENOM" id="CLU_130694_5_0_6"/>
<dbReference type="Proteomes" id="UP000008216">
    <property type="component" value="Chromosome"/>
</dbReference>
<dbReference type="GO" id="GO:0005737">
    <property type="term" value="C:cytoplasm"/>
    <property type="evidence" value="ECO:0007669"/>
    <property type="project" value="TreeGrafter"/>
</dbReference>
<dbReference type="Gene3D" id="3.30.1200.10">
    <property type="entry name" value="YggU-like"/>
    <property type="match status" value="1"/>
</dbReference>
<dbReference type="HAMAP" id="MF_00634">
    <property type="entry name" value="UPF0235"/>
    <property type="match status" value="1"/>
</dbReference>
<dbReference type="InterPro" id="IPR003746">
    <property type="entry name" value="DUF167"/>
</dbReference>
<dbReference type="InterPro" id="IPR036591">
    <property type="entry name" value="YggU-like_sf"/>
</dbReference>
<dbReference type="NCBIfam" id="TIGR00251">
    <property type="entry name" value="DUF167 family protein"/>
    <property type="match status" value="1"/>
</dbReference>
<dbReference type="NCBIfam" id="NF003466">
    <property type="entry name" value="PRK05090.1"/>
    <property type="match status" value="1"/>
</dbReference>
<dbReference type="PANTHER" id="PTHR13420">
    <property type="entry name" value="UPF0235 PROTEIN C15ORF40"/>
    <property type="match status" value="1"/>
</dbReference>
<dbReference type="PANTHER" id="PTHR13420:SF7">
    <property type="entry name" value="UPF0235 PROTEIN C15ORF40"/>
    <property type="match status" value="1"/>
</dbReference>
<dbReference type="Pfam" id="PF02594">
    <property type="entry name" value="DUF167"/>
    <property type="match status" value="1"/>
</dbReference>
<dbReference type="SMART" id="SM01152">
    <property type="entry name" value="DUF167"/>
    <property type="match status" value="1"/>
</dbReference>
<dbReference type="SUPFAM" id="SSF69786">
    <property type="entry name" value="YggU-like"/>
    <property type="match status" value="1"/>
</dbReference>
<reference key="1">
    <citation type="journal article" date="2007" name="J. Bacteriol.">
        <title>The genome sequence of avian pathogenic Escherichia coli strain O1:K1:H7 shares strong similarities with human extraintestinal pathogenic E. coli genomes.</title>
        <authorList>
            <person name="Johnson T.J."/>
            <person name="Kariyawasam S."/>
            <person name="Wannemuehler Y."/>
            <person name="Mangiamele P."/>
            <person name="Johnson S.J."/>
            <person name="Doetkott C."/>
            <person name="Skyberg J.A."/>
            <person name="Lynne A.M."/>
            <person name="Johnson J.R."/>
            <person name="Nolan L.K."/>
        </authorList>
    </citation>
    <scope>NUCLEOTIDE SEQUENCE [LARGE SCALE GENOMIC DNA]</scope>
</reference>
<sequence>MSAVTVNDDGLVLRLYIQPKASRDSIVGLHGDEVKVAITAPPVDGQANSHLVKFLGKQFRVAKSQVVIEKGELGRHKQIKIINPQQIPPEIAALIN</sequence>
<organism>
    <name type="scientific">Escherichia coli O1:K1 / APEC</name>
    <dbReference type="NCBI Taxonomy" id="405955"/>
    <lineage>
        <taxon>Bacteria</taxon>
        <taxon>Pseudomonadati</taxon>
        <taxon>Pseudomonadota</taxon>
        <taxon>Gammaproteobacteria</taxon>
        <taxon>Enterobacterales</taxon>
        <taxon>Enterobacteriaceae</taxon>
        <taxon>Escherichia</taxon>
    </lineage>
</organism>
<accession>A1AFD9</accession>
<evidence type="ECO:0000255" key="1">
    <source>
        <dbReference type="HAMAP-Rule" id="MF_00634"/>
    </source>
</evidence>
<gene>
    <name evidence="1" type="primary">yggU</name>
    <name type="ordered locus">Ecok1_28850</name>
    <name type="ORF">APECO1_3568</name>
</gene>
<feature type="chain" id="PRO_1000056765" description="UPF0235 protein YggU">
    <location>
        <begin position="1"/>
        <end position="96"/>
    </location>
</feature>
<protein>
    <recommendedName>
        <fullName evidence="1">UPF0235 protein YggU</fullName>
    </recommendedName>
</protein>
<keyword id="KW-1185">Reference proteome</keyword>
<proteinExistence type="inferred from homology"/>
<name>YGGU_ECOK1</name>